<feature type="chain" id="PRO_0000299906" description="Putative uncharacterized protein YDR544C">
    <location>
        <begin position="1"/>
        <end position="142"/>
    </location>
</feature>
<feature type="region of interest" description="Disordered" evidence="1">
    <location>
        <begin position="19"/>
        <end position="54"/>
    </location>
</feature>
<feature type="compositionally biased region" description="Basic residues" evidence="1">
    <location>
        <begin position="26"/>
        <end position="35"/>
    </location>
</feature>
<organism>
    <name type="scientific">Saccharomyces cerevisiae (strain ATCC 204508 / S288c)</name>
    <name type="common">Baker's yeast</name>
    <dbReference type="NCBI Taxonomy" id="559292"/>
    <lineage>
        <taxon>Eukaryota</taxon>
        <taxon>Fungi</taxon>
        <taxon>Dikarya</taxon>
        <taxon>Ascomycota</taxon>
        <taxon>Saccharomycotina</taxon>
        <taxon>Saccharomycetes</taxon>
        <taxon>Saccharomycetales</taxon>
        <taxon>Saccharomycetaceae</taxon>
        <taxon>Saccharomyces</taxon>
    </lineage>
</organism>
<proteinExistence type="uncertain"/>
<reference key="1">
    <citation type="journal article" date="1997" name="Nature">
        <title>The nucleotide sequence of Saccharomyces cerevisiae chromosome IV.</title>
        <authorList>
            <person name="Jacq C."/>
            <person name="Alt-Moerbe J."/>
            <person name="Andre B."/>
            <person name="Arnold W."/>
            <person name="Bahr A."/>
            <person name="Ballesta J.P.G."/>
            <person name="Bargues M."/>
            <person name="Baron L."/>
            <person name="Becker A."/>
            <person name="Biteau N."/>
            <person name="Bloecker H."/>
            <person name="Blugeon C."/>
            <person name="Boskovic J."/>
            <person name="Brandt P."/>
            <person name="Brueckner M."/>
            <person name="Buitrago M.J."/>
            <person name="Coster F."/>
            <person name="Delaveau T."/>
            <person name="del Rey F."/>
            <person name="Dujon B."/>
            <person name="Eide L.G."/>
            <person name="Garcia-Cantalejo J.M."/>
            <person name="Goffeau A."/>
            <person name="Gomez-Peris A."/>
            <person name="Granotier C."/>
            <person name="Hanemann V."/>
            <person name="Hankeln T."/>
            <person name="Hoheisel J.D."/>
            <person name="Jaeger W."/>
            <person name="Jimenez A."/>
            <person name="Jonniaux J.-L."/>
            <person name="Kraemer C."/>
            <person name="Kuester H."/>
            <person name="Laamanen P."/>
            <person name="Legros Y."/>
            <person name="Louis E.J."/>
            <person name="Moeller-Rieker S."/>
            <person name="Monnet A."/>
            <person name="Moro M."/>
            <person name="Mueller-Auer S."/>
            <person name="Nussbaumer B."/>
            <person name="Paricio N."/>
            <person name="Paulin L."/>
            <person name="Perea J."/>
            <person name="Perez-Alonso M."/>
            <person name="Perez-Ortin J.E."/>
            <person name="Pohl T.M."/>
            <person name="Prydz H."/>
            <person name="Purnelle B."/>
            <person name="Rasmussen S.W."/>
            <person name="Remacha M.A."/>
            <person name="Revuelta J.L."/>
            <person name="Rieger M."/>
            <person name="Salom D."/>
            <person name="Saluz H.P."/>
            <person name="Saiz J.E."/>
            <person name="Saren A.-M."/>
            <person name="Schaefer M."/>
            <person name="Scharfe M."/>
            <person name="Schmidt E.R."/>
            <person name="Schneider C."/>
            <person name="Scholler P."/>
            <person name="Schwarz S."/>
            <person name="Soler-Mira A."/>
            <person name="Urrestarazu L.A."/>
            <person name="Verhasselt P."/>
            <person name="Vissers S."/>
            <person name="Voet M."/>
            <person name="Volckaert G."/>
            <person name="Wagner G."/>
            <person name="Wambutt R."/>
            <person name="Wedler E."/>
            <person name="Wedler H."/>
            <person name="Woelfl S."/>
            <person name="Harris D.E."/>
            <person name="Bowman S."/>
            <person name="Brown D."/>
            <person name="Churcher C.M."/>
            <person name="Connor R."/>
            <person name="Dedman K."/>
            <person name="Gentles S."/>
            <person name="Hamlin N."/>
            <person name="Hunt S."/>
            <person name="Jones L."/>
            <person name="McDonald S."/>
            <person name="Murphy L.D."/>
            <person name="Niblett D."/>
            <person name="Odell C."/>
            <person name="Oliver K."/>
            <person name="Rajandream M.A."/>
            <person name="Richards C."/>
            <person name="Shore L."/>
            <person name="Walsh S.V."/>
            <person name="Barrell B.G."/>
            <person name="Dietrich F.S."/>
            <person name="Mulligan J.T."/>
            <person name="Allen E."/>
            <person name="Araujo R."/>
            <person name="Aviles E."/>
            <person name="Berno A."/>
            <person name="Carpenter J."/>
            <person name="Chen E."/>
            <person name="Cherry J.M."/>
            <person name="Chung E."/>
            <person name="Duncan M."/>
            <person name="Hunicke-Smith S."/>
            <person name="Hyman R.W."/>
            <person name="Komp C."/>
            <person name="Lashkari D."/>
            <person name="Lew H."/>
            <person name="Lin D."/>
            <person name="Mosedale D."/>
            <person name="Nakahara K."/>
            <person name="Namath A."/>
            <person name="Oefner P."/>
            <person name="Oh C."/>
            <person name="Petel F.X."/>
            <person name="Roberts D."/>
            <person name="Schramm S."/>
            <person name="Schroeder M."/>
            <person name="Shogren T."/>
            <person name="Shroff N."/>
            <person name="Winant A."/>
            <person name="Yelton M.A."/>
            <person name="Botstein D."/>
            <person name="Davis R.W."/>
            <person name="Johnston M."/>
            <person name="Andrews S."/>
            <person name="Brinkman R."/>
            <person name="Cooper J."/>
            <person name="Ding H."/>
            <person name="Du Z."/>
            <person name="Favello A."/>
            <person name="Fulton L."/>
            <person name="Gattung S."/>
            <person name="Greco T."/>
            <person name="Hallsworth K."/>
            <person name="Hawkins J."/>
            <person name="Hillier L.W."/>
            <person name="Jier M."/>
            <person name="Johnson D."/>
            <person name="Johnston L."/>
            <person name="Kirsten J."/>
            <person name="Kucaba T."/>
            <person name="Langston Y."/>
            <person name="Latreille P."/>
            <person name="Le T."/>
            <person name="Mardis E."/>
            <person name="Menezes S."/>
            <person name="Miller N."/>
            <person name="Nhan M."/>
            <person name="Pauley A."/>
            <person name="Peluso D."/>
            <person name="Rifkin L."/>
            <person name="Riles L."/>
            <person name="Taich A."/>
            <person name="Trevaskis E."/>
            <person name="Vignati D."/>
            <person name="Wilcox L."/>
            <person name="Wohldman P."/>
            <person name="Vaudin M."/>
            <person name="Wilson R."/>
            <person name="Waterston R."/>
            <person name="Albermann K."/>
            <person name="Hani J."/>
            <person name="Heumann K."/>
            <person name="Kleine K."/>
            <person name="Mewes H.-W."/>
            <person name="Zollner A."/>
            <person name="Zaccaria P."/>
        </authorList>
    </citation>
    <scope>NUCLEOTIDE SEQUENCE [LARGE SCALE GENOMIC DNA]</scope>
    <source>
        <strain>ATCC 204508 / S288c</strain>
    </source>
</reference>
<reference key="2">
    <citation type="journal article" date="2014" name="G3 (Bethesda)">
        <title>The reference genome sequence of Saccharomyces cerevisiae: Then and now.</title>
        <authorList>
            <person name="Engel S.R."/>
            <person name="Dietrich F.S."/>
            <person name="Fisk D.G."/>
            <person name="Binkley G."/>
            <person name="Balakrishnan R."/>
            <person name="Costanzo M.C."/>
            <person name="Dwight S.S."/>
            <person name="Hitz B.C."/>
            <person name="Karra K."/>
            <person name="Nash R.S."/>
            <person name="Weng S."/>
            <person name="Wong E.D."/>
            <person name="Lloyd P."/>
            <person name="Skrzypek M.S."/>
            <person name="Miyasato S.R."/>
            <person name="Simison M."/>
            <person name="Cherry J.M."/>
        </authorList>
    </citation>
    <scope>GENOME REANNOTATION</scope>
    <source>
        <strain>ATCC 204508 / S288c</strain>
    </source>
</reference>
<accession>Q03057</accession>
<evidence type="ECO:0000256" key="1">
    <source>
        <dbReference type="SAM" id="MobiDB-lite"/>
    </source>
</evidence>
<evidence type="ECO:0000305" key="2">
    <source>
    </source>
</evidence>
<sequence length="142" mass="15912">MSLRPCLTPSSMQYSDIYIHTTPHPHTPHHTHHTHTTPTPTPHPHTHTPTPERSLSLRLRQAKPDQPVSQITLHYPTSPLVTLTHSTIPPQPPSISLCTTTNRPSTITVTLQLPISNSTTTYPTISHLLLTILLFYPPLLKR</sequence>
<comment type="caution">
    <text evidence="2">Product of a dubious gene prediction unlikely to encode a functional protein. Because of that it is not part of the S.cerevisiae S288c complete/reference proteome set.</text>
</comment>
<protein>
    <recommendedName>
        <fullName>Putative uncharacterized protein YDR544C</fullName>
    </recommendedName>
</protein>
<gene>
    <name type="ordered locus">YDR544C</name>
</gene>
<dbReference type="EMBL" id="U43834">
    <property type="protein sequence ID" value="AAB64986.1"/>
    <property type="molecule type" value="Genomic_DNA"/>
</dbReference>
<dbReference type="PIR" id="S62023">
    <property type="entry name" value="S62023"/>
</dbReference>
<dbReference type="STRING" id="4932.YDR544C"/>
<dbReference type="PaxDb" id="4932-YDR544C"/>
<dbReference type="EnsemblFungi" id="YDR544C_mRNA">
    <property type="protein sequence ID" value="YDR544C"/>
    <property type="gene ID" value="YDR544C"/>
</dbReference>
<dbReference type="AGR" id="SGD:S000002952"/>
<dbReference type="SGD" id="S000002952">
    <property type="gene designation" value="YDR544C"/>
</dbReference>
<dbReference type="GeneTree" id="ENSGT00940000180487"/>
<dbReference type="HOGENOM" id="CLU_1975930_0_0_1"/>
<dbReference type="OMA" id="XHHTHTH"/>
<name>YD544_YEAST</name>